<comment type="function">
    <text evidence="2">Has both L-asparaginase and beta-aspartyl peptidase activity. May be involved in the production of L-aspartate, which can act as an excitatory neurotransmitter in some brain regions. Is highly active with L-Asp beta-methyl ester. Besides, has catalytic activity toward beta-aspartyl dipeptides and their methyl esters, including beta-L-Asp-L-Phe, beta-L-Asp-L-Phe methyl ester (aspartame), beta-L-Asp-L-Ala, beta-L-Asp-L-Leu and beta-L-Asp-L-Lys. Does not have aspartylglucosaminidase activity and is inactive toward GlcNAc-L-Asn. Likewise, has no activity toward glutamine.</text>
</comment>
<comment type="catalytic activity">
    <reaction evidence="2">
        <text>L-asparagine + H2O = L-aspartate + NH4(+)</text>
        <dbReference type="Rhea" id="RHEA:21016"/>
        <dbReference type="ChEBI" id="CHEBI:15377"/>
        <dbReference type="ChEBI" id="CHEBI:28938"/>
        <dbReference type="ChEBI" id="CHEBI:29991"/>
        <dbReference type="ChEBI" id="CHEBI:58048"/>
        <dbReference type="EC" id="3.5.1.1"/>
    </reaction>
</comment>
<comment type="catalytic activity">
    <reaction evidence="2">
        <text>Cleavage of a beta-linked Asp residue from the N-terminus of a polypeptide.</text>
        <dbReference type="EC" id="3.4.19.5"/>
    </reaction>
</comment>
<comment type="subunit">
    <text evidence="2">Heterodimer of an alpha and beta chain produced by autocleavage. This heterodimer may then dimerize in turn, giving rise to a heterotetramer.</text>
</comment>
<comment type="subcellular location">
    <subcellularLocation>
        <location evidence="2">Cytoplasm</location>
    </subcellularLocation>
    <text evidence="2 3">Midpiece of sperm tail. In retina localizes in photoreceptor inner segment (PubMed:27106100).</text>
</comment>
<comment type="tissue specificity">
    <text evidence="3">High expression in the heart and brain while low to minimal expression in the other tissues. In ocular tissues, high levels is observed in the optic nerve and retina while relatively low levels of expression are detected in the iris-ciliary body, lens or retinal pigment epithelium.</text>
</comment>
<comment type="PTM">
    <text evidence="2">Cleaved into an alpha and beta chain by autocatalysis; this activates the enzyme. The N-terminal residue of the beta subunit is responsible for the nucleophile hydrolase activity.</text>
</comment>
<comment type="similarity">
    <text evidence="4">Belongs to the Ntn-hydrolase family.</text>
</comment>
<comment type="sequence caution" evidence="4">
    <conflict type="erroneous initiation">
        <sequence resource="EMBL-CDS" id="AAH16106"/>
    </conflict>
</comment>
<comment type="sequence caution" evidence="4">
    <conflict type="frameshift">
        <sequence resource="EMBL-CDS" id="BAB24431"/>
    </conflict>
</comment>
<comment type="sequence caution" evidence="4">
    <conflict type="frameshift">
        <sequence resource="EMBL-CDS" id="BAC25294"/>
    </conflict>
</comment>
<dbReference type="EC" id="3.4.19.5" evidence="2"/>
<dbReference type="EC" id="3.5.1.1" evidence="2"/>
<dbReference type="EMBL" id="AK006147">
    <property type="protein sequence ID" value="BAB24431.1"/>
    <property type="status" value="ALT_FRAME"/>
    <property type="molecule type" value="mRNA"/>
</dbReference>
<dbReference type="EMBL" id="AK010381">
    <property type="protein sequence ID" value="BAC25294.1"/>
    <property type="status" value="ALT_FRAME"/>
    <property type="molecule type" value="mRNA"/>
</dbReference>
<dbReference type="EMBL" id="AK030209">
    <property type="protein sequence ID" value="BAC26844.1"/>
    <property type="molecule type" value="mRNA"/>
</dbReference>
<dbReference type="EMBL" id="BC016106">
    <property type="protein sequence ID" value="AAH16106.1"/>
    <property type="status" value="ALT_INIT"/>
    <property type="molecule type" value="mRNA"/>
</dbReference>
<dbReference type="CCDS" id="CCDS29566.1"/>
<dbReference type="RefSeq" id="NP_079886.2">
    <property type="nucleotide sequence ID" value="NM_025610.3"/>
</dbReference>
<dbReference type="SMR" id="Q8C0M9"/>
<dbReference type="BioGRID" id="211529">
    <property type="interactions" value="9"/>
</dbReference>
<dbReference type="FunCoup" id="Q8C0M9">
    <property type="interactions" value="115"/>
</dbReference>
<dbReference type="IntAct" id="Q8C0M9">
    <property type="interactions" value="3"/>
</dbReference>
<dbReference type="MINT" id="Q8C0M9"/>
<dbReference type="STRING" id="10090.ENSMUSP00000051709"/>
<dbReference type="GlyGen" id="Q8C0M9">
    <property type="glycosylation" value="1 site, 1 O-linked glycan (1 site)"/>
</dbReference>
<dbReference type="iPTMnet" id="Q8C0M9"/>
<dbReference type="PhosphoSitePlus" id="Q8C0M9"/>
<dbReference type="SwissPalm" id="Q8C0M9"/>
<dbReference type="REPRODUCTION-2DPAGE" id="IPI00223875"/>
<dbReference type="jPOST" id="Q8C0M9"/>
<dbReference type="PaxDb" id="10090-ENSMUSP00000051709"/>
<dbReference type="PeptideAtlas" id="Q8C0M9"/>
<dbReference type="ProteomicsDB" id="277257"/>
<dbReference type="Pumba" id="Q8C0M9"/>
<dbReference type="Antibodypedia" id="14797">
    <property type="antibodies" value="285 antibodies from 32 providers"/>
</dbReference>
<dbReference type="DNASU" id="66514"/>
<dbReference type="Ensembl" id="ENSMUST00000049948.6">
    <property type="protein sequence ID" value="ENSMUSP00000051709.5"/>
    <property type="gene ID" value="ENSMUSG00000024654.9"/>
</dbReference>
<dbReference type="GeneID" id="66514"/>
<dbReference type="KEGG" id="mmu:66514"/>
<dbReference type="UCSC" id="uc008gon.1">
    <property type="organism name" value="mouse"/>
</dbReference>
<dbReference type="AGR" id="MGI:1913764"/>
<dbReference type="CTD" id="80150"/>
<dbReference type="MGI" id="MGI:1913764">
    <property type="gene designation" value="Asrgl1"/>
</dbReference>
<dbReference type="VEuPathDB" id="HostDB:ENSMUSG00000024654"/>
<dbReference type="eggNOG" id="KOG1592">
    <property type="taxonomic scope" value="Eukaryota"/>
</dbReference>
<dbReference type="GeneTree" id="ENSGT00950000183045"/>
<dbReference type="HOGENOM" id="CLU_021603_1_2_1"/>
<dbReference type="InParanoid" id="Q8C0M9"/>
<dbReference type="OMA" id="HMSWAYQ"/>
<dbReference type="OrthoDB" id="2262349at2759"/>
<dbReference type="PhylomeDB" id="Q8C0M9"/>
<dbReference type="TreeFam" id="TF323960"/>
<dbReference type="Reactome" id="R-MMU-8964208">
    <property type="pathway name" value="Phenylalanine metabolism"/>
</dbReference>
<dbReference type="BioGRID-ORCS" id="66514">
    <property type="hits" value="0 hits in 80 CRISPR screens"/>
</dbReference>
<dbReference type="ChiTaRS" id="Asrgl1">
    <property type="organism name" value="mouse"/>
</dbReference>
<dbReference type="PRO" id="PR:Q8C0M9"/>
<dbReference type="Proteomes" id="UP000000589">
    <property type="component" value="Chromosome 19"/>
</dbReference>
<dbReference type="RNAct" id="Q8C0M9">
    <property type="molecule type" value="protein"/>
</dbReference>
<dbReference type="Bgee" id="ENSMUSG00000024654">
    <property type="expression patterns" value="Expressed in seminiferous tubule of testis and 255 other cell types or tissues"/>
</dbReference>
<dbReference type="GO" id="GO:0005737">
    <property type="term" value="C:cytoplasm"/>
    <property type="evidence" value="ECO:0000250"/>
    <property type="project" value="UniProtKB"/>
</dbReference>
<dbReference type="GO" id="GO:0001917">
    <property type="term" value="C:photoreceptor inner segment"/>
    <property type="evidence" value="ECO:0000314"/>
    <property type="project" value="UniProtKB"/>
</dbReference>
<dbReference type="GO" id="GO:0004067">
    <property type="term" value="F:asparaginase activity"/>
    <property type="evidence" value="ECO:0000250"/>
    <property type="project" value="UniProtKB"/>
</dbReference>
<dbReference type="GO" id="GO:0008798">
    <property type="term" value="F:beta-aspartyl-peptidase activity"/>
    <property type="evidence" value="ECO:0000250"/>
    <property type="project" value="UniProtKB"/>
</dbReference>
<dbReference type="GO" id="GO:0033345">
    <property type="term" value="P:asparagine catabolic process via L-aspartate"/>
    <property type="evidence" value="ECO:0000250"/>
    <property type="project" value="UniProtKB"/>
</dbReference>
<dbReference type="GO" id="GO:0006508">
    <property type="term" value="P:proteolysis"/>
    <property type="evidence" value="ECO:0007669"/>
    <property type="project" value="UniProtKB-KW"/>
</dbReference>
<dbReference type="CDD" id="cd04702">
    <property type="entry name" value="ASRGL1_like"/>
    <property type="match status" value="1"/>
</dbReference>
<dbReference type="FunFam" id="3.60.20.30:FF:000001">
    <property type="entry name" value="Isoaspartyl peptidase/L-asparaginase"/>
    <property type="match status" value="1"/>
</dbReference>
<dbReference type="Gene3D" id="3.60.20.30">
    <property type="entry name" value="(Glycosyl)asparaginase"/>
    <property type="match status" value="1"/>
</dbReference>
<dbReference type="InterPro" id="IPR033844">
    <property type="entry name" value="ASRGL1_meta"/>
</dbReference>
<dbReference type="InterPro" id="IPR029055">
    <property type="entry name" value="Ntn_hydrolases_N"/>
</dbReference>
<dbReference type="InterPro" id="IPR000246">
    <property type="entry name" value="Peptidase_T2"/>
</dbReference>
<dbReference type="PANTHER" id="PTHR10188:SF41">
    <property type="entry name" value="ISOASPARTYL PEPTIDASE_L-ASPARAGINASE"/>
    <property type="match status" value="1"/>
</dbReference>
<dbReference type="PANTHER" id="PTHR10188">
    <property type="entry name" value="L-ASPARAGINASE"/>
    <property type="match status" value="1"/>
</dbReference>
<dbReference type="Pfam" id="PF01112">
    <property type="entry name" value="Asparaginase_2"/>
    <property type="match status" value="1"/>
</dbReference>
<dbReference type="SUPFAM" id="SSF56235">
    <property type="entry name" value="N-terminal nucleophile aminohydrolases (Ntn hydrolases)"/>
    <property type="match status" value="1"/>
</dbReference>
<accession>Q8C0M9</accession>
<accession>Q91WC8</accession>
<accession>Q9CVX3</accession>
<name>ASGL1_MOUSE</name>
<protein>
    <recommendedName>
        <fullName>Isoaspartyl peptidase/L-asparaginase</fullName>
        <ecNumber evidence="2">3.4.19.5</ecNumber>
        <ecNumber evidence="2">3.5.1.1</ecNumber>
    </recommendedName>
    <alternativeName>
        <fullName>Asparaginase-like protein 1</fullName>
    </alternativeName>
    <alternativeName>
        <fullName>Beta-aspartyl-peptidase</fullName>
    </alternativeName>
    <alternativeName>
        <fullName>Isoaspartyl dipeptidase</fullName>
    </alternativeName>
    <alternativeName>
        <fullName>L-asparagine amidohydrolase</fullName>
    </alternativeName>
    <component>
        <recommendedName>
            <fullName>Isoaspartyl peptidase/L-asparaginase alpha chain</fullName>
        </recommendedName>
    </component>
    <component>
        <recommendedName>
            <fullName>Isoaspartyl peptidase/L-asparaginase beta chain</fullName>
        </recommendedName>
    </component>
</protein>
<organism>
    <name type="scientific">Mus musculus</name>
    <name type="common">Mouse</name>
    <dbReference type="NCBI Taxonomy" id="10090"/>
    <lineage>
        <taxon>Eukaryota</taxon>
        <taxon>Metazoa</taxon>
        <taxon>Chordata</taxon>
        <taxon>Craniata</taxon>
        <taxon>Vertebrata</taxon>
        <taxon>Euteleostomi</taxon>
        <taxon>Mammalia</taxon>
        <taxon>Eutheria</taxon>
        <taxon>Euarchontoglires</taxon>
        <taxon>Glires</taxon>
        <taxon>Rodentia</taxon>
        <taxon>Myomorpha</taxon>
        <taxon>Muroidea</taxon>
        <taxon>Muridae</taxon>
        <taxon>Murinae</taxon>
        <taxon>Mus</taxon>
        <taxon>Mus</taxon>
    </lineage>
</organism>
<keyword id="KW-0068">Autocatalytic cleavage</keyword>
<keyword id="KW-0963">Cytoplasm</keyword>
<keyword id="KW-0903">Direct protein sequencing</keyword>
<keyword id="KW-0378">Hydrolase</keyword>
<keyword id="KW-0645">Protease</keyword>
<keyword id="KW-1185">Reference proteome</keyword>
<evidence type="ECO:0000250" key="1"/>
<evidence type="ECO:0000250" key="2">
    <source>
        <dbReference type="UniProtKB" id="Q7L266"/>
    </source>
</evidence>
<evidence type="ECO:0000269" key="3">
    <source>
    </source>
</evidence>
<evidence type="ECO:0000305" key="4"/>
<proteinExistence type="evidence at protein level"/>
<gene>
    <name type="primary">Asrgl1</name>
</gene>
<feature type="chain" id="PRO_0000420559" description="Isoaspartyl peptidase/L-asparaginase alpha chain">
    <location>
        <begin position="1"/>
        <end position="184"/>
    </location>
</feature>
<feature type="chain" id="PRO_0000420560" description="Isoaspartyl peptidase/L-asparaginase beta chain">
    <location>
        <begin position="185"/>
        <end position="326"/>
    </location>
</feature>
<feature type="active site" description="Nucleophile" evidence="1">
    <location>
        <position position="185"/>
    </location>
</feature>
<feature type="binding site" evidence="1">
    <location>
        <begin position="213"/>
        <end position="216"/>
    </location>
    <ligand>
        <name>substrate</name>
    </ligand>
</feature>
<feature type="binding site" evidence="1">
    <location>
        <begin position="236"/>
        <end position="239"/>
    </location>
    <ligand>
        <name>substrate</name>
    </ligand>
</feature>
<reference key="1">
    <citation type="journal article" date="2005" name="Science">
        <title>The transcriptional landscape of the mammalian genome.</title>
        <authorList>
            <person name="Carninci P."/>
            <person name="Kasukawa T."/>
            <person name="Katayama S."/>
            <person name="Gough J."/>
            <person name="Frith M.C."/>
            <person name="Maeda N."/>
            <person name="Oyama R."/>
            <person name="Ravasi T."/>
            <person name="Lenhard B."/>
            <person name="Wells C."/>
            <person name="Kodzius R."/>
            <person name="Shimokawa K."/>
            <person name="Bajic V.B."/>
            <person name="Brenner S.E."/>
            <person name="Batalov S."/>
            <person name="Forrest A.R."/>
            <person name="Zavolan M."/>
            <person name="Davis M.J."/>
            <person name="Wilming L.G."/>
            <person name="Aidinis V."/>
            <person name="Allen J.E."/>
            <person name="Ambesi-Impiombato A."/>
            <person name="Apweiler R."/>
            <person name="Aturaliya R.N."/>
            <person name="Bailey T.L."/>
            <person name="Bansal M."/>
            <person name="Baxter L."/>
            <person name="Beisel K.W."/>
            <person name="Bersano T."/>
            <person name="Bono H."/>
            <person name="Chalk A.M."/>
            <person name="Chiu K.P."/>
            <person name="Choudhary V."/>
            <person name="Christoffels A."/>
            <person name="Clutterbuck D.R."/>
            <person name="Crowe M.L."/>
            <person name="Dalla E."/>
            <person name="Dalrymple B.P."/>
            <person name="de Bono B."/>
            <person name="Della Gatta G."/>
            <person name="di Bernardo D."/>
            <person name="Down T."/>
            <person name="Engstrom P."/>
            <person name="Fagiolini M."/>
            <person name="Faulkner G."/>
            <person name="Fletcher C.F."/>
            <person name="Fukushima T."/>
            <person name="Furuno M."/>
            <person name="Futaki S."/>
            <person name="Gariboldi M."/>
            <person name="Georgii-Hemming P."/>
            <person name="Gingeras T.R."/>
            <person name="Gojobori T."/>
            <person name="Green R.E."/>
            <person name="Gustincich S."/>
            <person name="Harbers M."/>
            <person name="Hayashi Y."/>
            <person name="Hensch T.K."/>
            <person name="Hirokawa N."/>
            <person name="Hill D."/>
            <person name="Huminiecki L."/>
            <person name="Iacono M."/>
            <person name="Ikeo K."/>
            <person name="Iwama A."/>
            <person name="Ishikawa T."/>
            <person name="Jakt M."/>
            <person name="Kanapin A."/>
            <person name="Katoh M."/>
            <person name="Kawasawa Y."/>
            <person name="Kelso J."/>
            <person name="Kitamura H."/>
            <person name="Kitano H."/>
            <person name="Kollias G."/>
            <person name="Krishnan S.P."/>
            <person name="Kruger A."/>
            <person name="Kummerfeld S.K."/>
            <person name="Kurochkin I.V."/>
            <person name="Lareau L.F."/>
            <person name="Lazarevic D."/>
            <person name="Lipovich L."/>
            <person name="Liu J."/>
            <person name="Liuni S."/>
            <person name="McWilliam S."/>
            <person name="Madan Babu M."/>
            <person name="Madera M."/>
            <person name="Marchionni L."/>
            <person name="Matsuda H."/>
            <person name="Matsuzawa S."/>
            <person name="Miki H."/>
            <person name="Mignone F."/>
            <person name="Miyake S."/>
            <person name="Morris K."/>
            <person name="Mottagui-Tabar S."/>
            <person name="Mulder N."/>
            <person name="Nakano N."/>
            <person name="Nakauchi H."/>
            <person name="Ng P."/>
            <person name="Nilsson R."/>
            <person name="Nishiguchi S."/>
            <person name="Nishikawa S."/>
            <person name="Nori F."/>
            <person name="Ohara O."/>
            <person name="Okazaki Y."/>
            <person name="Orlando V."/>
            <person name="Pang K.C."/>
            <person name="Pavan W.J."/>
            <person name="Pavesi G."/>
            <person name="Pesole G."/>
            <person name="Petrovsky N."/>
            <person name="Piazza S."/>
            <person name="Reed J."/>
            <person name="Reid J.F."/>
            <person name="Ring B.Z."/>
            <person name="Ringwald M."/>
            <person name="Rost B."/>
            <person name="Ruan Y."/>
            <person name="Salzberg S.L."/>
            <person name="Sandelin A."/>
            <person name="Schneider C."/>
            <person name="Schoenbach C."/>
            <person name="Sekiguchi K."/>
            <person name="Semple C.A."/>
            <person name="Seno S."/>
            <person name="Sessa L."/>
            <person name="Sheng Y."/>
            <person name="Shibata Y."/>
            <person name="Shimada H."/>
            <person name="Shimada K."/>
            <person name="Silva D."/>
            <person name="Sinclair B."/>
            <person name="Sperling S."/>
            <person name="Stupka E."/>
            <person name="Sugiura K."/>
            <person name="Sultana R."/>
            <person name="Takenaka Y."/>
            <person name="Taki K."/>
            <person name="Tammoja K."/>
            <person name="Tan S.L."/>
            <person name="Tang S."/>
            <person name="Taylor M.S."/>
            <person name="Tegner J."/>
            <person name="Teichmann S.A."/>
            <person name="Ueda H.R."/>
            <person name="van Nimwegen E."/>
            <person name="Verardo R."/>
            <person name="Wei C.L."/>
            <person name="Yagi K."/>
            <person name="Yamanishi H."/>
            <person name="Zabarovsky E."/>
            <person name="Zhu S."/>
            <person name="Zimmer A."/>
            <person name="Hide W."/>
            <person name="Bult C."/>
            <person name="Grimmond S.M."/>
            <person name="Teasdale R.D."/>
            <person name="Liu E.T."/>
            <person name="Brusic V."/>
            <person name="Quackenbush J."/>
            <person name="Wahlestedt C."/>
            <person name="Mattick J.S."/>
            <person name="Hume D.A."/>
            <person name="Kai C."/>
            <person name="Sasaki D."/>
            <person name="Tomaru Y."/>
            <person name="Fukuda S."/>
            <person name="Kanamori-Katayama M."/>
            <person name="Suzuki M."/>
            <person name="Aoki J."/>
            <person name="Arakawa T."/>
            <person name="Iida J."/>
            <person name="Imamura K."/>
            <person name="Itoh M."/>
            <person name="Kato T."/>
            <person name="Kawaji H."/>
            <person name="Kawagashira N."/>
            <person name="Kawashima T."/>
            <person name="Kojima M."/>
            <person name="Kondo S."/>
            <person name="Konno H."/>
            <person name="Nakano K."/>
            <person name="Ninomiya N."/>
            <person name="Nishio T."/>
            <person name="Okada M."/>
            <person name="Plessy C."/>
            <person name="Shibata K."/>
            <person name="Shiraki T."/>
            <person name="Suzuki S."/>
            <person name="Tagami M."/>
            <person name="Waki K."/>
            <person name="Watahiki A."/>
            <person name="Okamura-Oho Y."/>
            <person name="Suzuki H."/>
            <person name="Kawai J."/>
            <person name="Hayashizaki Y."/>
        </authorList>
    </citation>
    <scope>NUCLEOTIDE SEQUENCE [LARGE SCALE MRNA]</scope>
    <source>
        <strain>C57BL/6J</strain>
        <tissue>Testis</tissue>
    </source>
</reference>
<reference key="2">
    <citation type="submission" date="2009-01" db="UniProtKB">
        <authorList>
            <person name="Lubec G."/>
            <person name="Sunyer B."/>
            <person name="Chen W.-Q."/>
        </authorList>
    </citation>
    <scope>PROTEIN SEQUENCE OF 6-13; 103-120 AND 129-155</scope>
    <scope>IDENTIFICATION BY MASS SPECTROMETRY</scope>
    <source>
        <strain>OF1</strain>
        <tissue>Hippocampus</tissue>
    </source>
</reference>
<reference key="3">
    <citation type="journal article" date="2004" name="Genome Res.">
        <title>The status, quality, and expansion of the NIH full-length cDNA project: the Mammalian Gene Collection (MGC).</title>
        <authorList>
            <consortium name="The MGC Project Team"/>
        </authorList>
    </citation>
    <scope>NUCLEOTIDE SEQUENCE [LARGE SCALE MRNA] OF 80-326</scope>
    <source>
        <strain>FVB/N</strain>
        <tissue>Salivary gland</tissue>
    </source>
</reference>
<reference key="4">
    <citation type="journal article" date="2010" name="Cell">
        <title>A tissue-specific atlas of mouse protein phosphorylation and expression.</title>
        <authorList>
            <person name="Huttlin E.L."/>
            <person name="Jedrychowski M.P."/>
            <person name="Elias J.E."/>
            <person name="Goswami T."/>
            <person name="Rad R."/>
            <person name="Beausoleil S.A."/>
            <person name="Villen J."/>
            <person name="Haas W."/>
            <person name="Sowa M.E."/>
            <person name="Gygi S.P."/>
        </authorList>
    </citation>
    <scope>IDENTIFICATION BY MASS SPECTROMETRY [LARGE SCALE ANALYSIS]</scope>
    <source>
        <tissue>Brain</tissue>
        <tissue>Heart</tissue>
        <tissue>Kidney</tissue>
        <tissue>Liver</tissue>
        <tissue>Lung</tissue>
        <tissue>Pancreas</tissue>
        <tissue>Spleen</tissue>
        <tissue>Testis</tissue>
    </source>
</reference>
<reference key="5">
    <citation type="journal article" date="2016" name="Hum. Mol. Genet.">
        <title>A missense mutation in ASRGL1 is involved in causing autosomal recessive retinal degeneration.</title>
        <authorList>
            <person name="Biswas P."/>
            <person name="Chavali V.R."/>
            <person name="Agnello G."/>
            <person name="Stone E."/>
            <person name="Chakarova C."/>
            <person name="Duncan J.L."/>
            <person name="Kannabiran C."/>
            <person name="Homsher M."/>
            <person name="Bhattacharya S.S."/>
            <person name="Naeem M.A."/>
            <person name="Kimchi A."/>
            <person name="Sharon D."/>
            <person name="Iwata T."/>
            <person name="Riazuddin S."/>
            <person name="Reddy G.B."/>
            <person name="Hejtmancik J.F."/>
            <person name="Georgiou G."/>
            <person name="Riazuddin S.A."/>
            <person name="Ayyagari R."/>
        </authorList>
    </citation>
    <scope>TISSUE SPECIFICITY</scope>
    <scope>SUBCELLULAR LOCATION</scope>
</reference>
<sequence>MACARGTVAPPVRASIDVSLVVVVHGGGASNISANRKELVREGIARAATEGYKILKAGGSAVDAVEGAVTVLENDPEFNAGYGSVLNVNGDIEMDASIMDGKDLSAGAVSAVRCIANPVKLARLVMEKTPHCFLTGHGAEKFAEDMGIPQVPVEKLITERTKKHLEKEKLEKGAQNADCPKNSGTVGAVALDCRGNLAYATSTGGIVNKMVGRVGDSPCIGAGGYADNNLGAVSTTGHGESILKVNLARLALFHVEQGKTVEEAAQLALDYMKSKLKGLGGLILVNKTGDWVAKWTSASMPWAAVKNGKLQAGIDLCETRTRDLPC</sequence>